<dbReference type="EMBL" id="CP001488">
    <property type="protein sequence ID" value="ACO01438.1"/>
    <property type="molecule type" value="Genomic_DNA"/>
</dbReference>
<dbReference type="RefSeq" id="WP_002964792.1">
    <property type="nucleotide sequence ID" value="NC_012441.1"/>
</dbReference>
<dbReference type="SMR" id="C0REW6"/>
<dbReference type="GeneID" id="97533143"/>
<dbReference type="KEGG" id="bmi:BMEA_A1756"/>
<dbReference type="HOGENOM" id="CLU_087936_3_0_5"/>
<dbReference type="Proteomes" id="UP000001748">
    <property type="component" value="Chromosome I"/>
</dbReference>
<dbReference type="GO" id="GO:0005737">
    <property type="term" value="C:cytoplasm"/>
    <property type="evidence" value="ECO:0007669"/>
    <property type="project" value="UniProtKB-SubCell"/>
</dbReference>
<dbReference type="GO" id="GO:0009379">
    <property type="term" value="C:Holliday junction helicase complex"/>
    <property type="evidence" value="ECO:0007669"/>
    <property type="project" value="InterPro"/>
</dbReference>
<dbReference type="GO" id="GO:0048476">
    <property type="term" value="C:Holliday junction resolvase complex"/>
    <property type="evidence" value="ECO:0007669"/>
    <property type="project" value="UniProtKB-UniRule"/>
</dbReference>
<dbReference type="GO" id="GO:0005524">
    <property type="term" value="F:ATP binding"/>
    <property type="evidence" value="ECO:0007669"/>
    <property type="project" value="InterPro"/>
</dbReference>
<dbReference type="GO" id="GO:0000400">
    <property type="term" value="F:four-way junction DNA binding"/>
    <property type="evidence" value="ECO:0007669"/>
    <property type="project" value="UniProtKB-UniRule"/>
</dbReference>
<dbReference type="GO" id="GO:0009378">
    <property type="term" value="F:four-way junction helicase activity"/>
    <property type="evidence" value="ECO:0007669"/>
    <property type="project" value="InterPro"/>
</dbReference>
<dbReference type="GO" id="GO:0006310">
    <property type="term" value="P:DNA recombination"/>
    <property type="evidence" value="ECO:0007669"/>
    <property type="project" value="UniProtKB-UniRule"/>
</dbReference>
<dbReference type="GO" id="GO:0006281">
    <property type="term" value="P:DNA repair"/>
    <property type="evidence" value="ECO:0007669"/>
    <property type="project" value="UniProtKB-UniRule"/>
</dbReference>
<dbReference type="Gene3D" id="1.10.150.20">
    <property type="entry name" value="5' to 3' exonuclease, C-terminal subdomain"/>
    <property type="match status" value="1"/>
</dbReference>
<dbReference type="Gene3D" id="1.10.8.10">
    <property type="entry name" value="DNA helicase RuvA subunit, C-terminal domain"/>
    <property type="match status" value="1"/>
</dbReference>
<dbReference type="Gene3D" id="2.40.50.140">
    <property type="entry name" value="Nucleic acid-binding proteins"/>
    <property type="match status" value="1"/>
</dbReference>
<dbReference type="HAMAP" id="MF_00031">
    <property type="entry name" value="DNA_HJ_migration_RuvA"/>
    <property type="match status" value="1"/>
</dbReference>
<dbReference type="InterPro" id="IPR013849">
    <property type="entry name" value="DNA_helicase_Holl-junc_RuvA_I"/>
</dbReference>
<dbReference type="InterPro" id="IPR003583">
    <property type="entry name" value="Hlx-hairpin-Hlx_DNA-bd_motif"/>
</dbReference>
<dbReference type="InterPro" id="IPR012340">
    <property type="entry name" value="NA-bd_OB-fold"/>
</dbReference>
<dbReference type="InterPro" id="IPR000085">
    <property type="entry name" value="RuvA"/>
</dbReference>
<dbReference type="InterPro" id="IPR010994">
    <property type="entry name" value="RuvA_2-like"/>
</dbReference>
<dbReference type="InterPro" id="IPR011114">
    <property type="entry name" value="RuvA_C"/>
</dbReference>
<dbReference type="InterPro" id="IPR036267">
    <property type="entry name" value="RuvA_C_sf"/>
</dbReference>
<dbReference type="NCBIfam" id="TIGR00084">
    <property type="entry name" value="ruvA"/>
    <property type="match status" value="1"/>
</dbReference>
<dbReference type="Pfam" id="PF14520">
    <property type="entry name" value="HHH_5"/>
    <property type="match status" value="1"/>
</dbReference>
<dbReference type="Pfam" id="PF07499">
    <property type="entry name" value="RuvA_C"/>
    <property type="match status" value="1"/>
</dbReference>
<dbReference type="Pfam" id="PF01330">
    <property type="entry name" value="RuvA_N"/>
    <property type="match status" value="1"/>
</dbReference>
<dbReference type="SMART" id="SM00278">
    <property type="entry name" value="HhH1"/>
    <property type="match status" value="2"/>
</dbReference>
<dbReference type="SUPFAM" id="SSF46929">
    <property type="entry name" value="DNA helicase RuvA subunit, C-terminal domain"/>
    <property type="match status" value="1"/>
</dbReference>
<dbReference type="SUPFAM" id="SSF50249">
    <property type="entry name" value="Nucleic acid-binding proteins"/>
    <property type="match status" value="1"/>
</dbReference>
<dbReference type="SUPFAM" id="SSF47781">
    <property type="entry name" value="RuvA domain 2-like"/>
    <property type="match status" value="1"/>
</dbReference>
<name>RUVA_BRUMB</name>
<evidence type="ECO:0000255" key="1">
    <source>
        <dbReference type="HAMAP-Rule" id="MF_00031"/>
    </source>
</evidence>
<gene>
    <name evidence="1" type="primary">ruvA</name>
    <name type="ordered locus">BMEA_A1756</name>
</gene>
<reference key="1">
    <citation type="submission" date="2009-03" db="EMBL/GenBank/DDBJ databases">
        <title>Brucella melitensis ATCC 23457 whole genome shotgun sequencing project.</title>
        <authorList>
            <person name="Setubal J.C."/>
            <person name="Boyle S."/>
            <person name="Crasta O.R."/>
            <person name="Gillespie J.J."/>
            <person name="Kenyon R.W."/>
            <person name="Lu J."/>
            <person name="Mane S."/>
            <person name="Nagrani S."/>
            <person name="Shallom J.M."/>
            <person name="Shallom S."/>
            <person name="Shukla M."/>
            <person name="Snyder E.E."/>
            <person name="Sobral B.W."/>
            <person name="Wattam A.R."/>
            <person name="Will R."/>
            <person name="Williams K."/>
            <person name="Yoo H."/>
            <person name="Munk C."/>
            <person name="Tapia R."/>
            <person name="Han C."/>
            <person name="Detter J.C."/>
            <person name="Bruce D."/>
            <person name="Brettin T.S."/>
        </authorList>
    </citation>
    <scope>NUCLEOTIDE SEQUENCE [LARGE SCALE GENOMIC DNA]</scope>
    <source>
        <strain>ATCC 23457</strain>
    </source>
</reference>
<proteinExistence type="inferred from homology"/>
<comment type="function">
    <text evidence="1">The RuvA-RuvB-RuvC complex processes Holliday junction (HJ) DNA during genetic recombination and DNA repair, while the RuvA-RuvB complex plays an important role in the rescue of blocked DNA replication forks via replication fork reversal (RFR). RuvA specifically binds to HJ cruciform DNA, conferring on it an open structure. The RuvB hexamer acts as an ATP-dependent pump, pulling dsDNA into and through the RuvAB complex. HJ branch migration allows RuvC to scan DNA until it finds its consensus sequence, where it cleaves and resolves the cruciform DNA.</text>
</comment>
<comment type="subunit">
    <text evidence="1">Homotetramer. Forms an RuvA(8)-RuvB(12)-Holliday junction (HJ) complex. HJ DNA is sandwiched between 2 RuvA tetramers; dsDNA enters through RuvA and exits via RuvB. An RuvB hexamer assembles on each DNA strand where it exits the tetramer. Each RuvB hexamer is contacted by two RuvA subunits (via domain III) on 2 adjacent RuvB subunits; this complex drives branch migration. In the full resolvosome a probable DNA-RuvA(4)-RuvB(12)-RuvC(2) complex forms which resolves the HJ.</text>
</comment>
<comment type="subcellular location">
    <subcellularLocation>
        <location evidence="1">Cytoplasm</location>
    </subcellularLocation>
</comment>
<comment type="domain">
    <text evidence="1">Has three domains with a flexible linker between the domains II and III and assumes an 'L' shape. Domain III is highly mobile and contacts RuvB.</text>
</comment>
<comment type="similarity">
    <text evidence="1">Belongs to the RuvA family.</text>
</comment>
<sequence length="205" mass="21227">MIGKLKGVIDEIAEDHAVIDVHGVGYVAFCSARTLGNLGGAGEAAILFIETYVREDMIRLYGFATQLEREWFRLLQNVQGVGAKVALAVLGTLSPSELANAIALRDIAMVSRAPGVGKKVAERIVTELKNKAPAFAGEASGTIGLKQELGAGAAPAPVADAVSALSNLGYSRDQAANAVAAALKETGEGADSAKLIRLGLKELSQ</sequence>
<accession>C0REW6</accession>
<feature type="chain" id="PRO_1000195124" description="Holliday junction branch migration complex subunit RuvA">
    <location>
        <begin position="1"/>
        <end position="205"/>
    </location>
</feature>
<feature type="region of interest" description="Domain I" evidence="1">
    <location>
        <begin position="1"/>
        <end position="64"/>
    </location>
</feature>
<feature type="region of interest" description="Domain II" evidence="1">
    <location>
        <begin position="65"/>
        <end position="143"/>
    </location>
</feature>
<feature type="region of interest" description="Flexible linker" evidence="1">
    <location>
        <begin position="144"/>
        <end position="152"/>
    </location>
</feature>
<feature type="region of interest" description="Domain III" evidence="1">
    <location>
        <begin position="153"/>
        <end position="205"/>
    </location>
</feature>
<keyword id="KW-0963">Cytoplasm</keyword>
<keyword id="KW-0227">DNA damage</keyword>
<keyword id="KW-0233">DNA recombination</keyword>
<keyword id="KW-0234">DNA repair</keyword>
<keyword id="KW-0238">DNA-binding</keyword>
<organism>
    <name type="scientific">Brucella melitensis biotype 2 (strain ATCC 23457)</name>
    <dbReference type="NCBI Taxonomy" id="546272"/>
    <lineage>
        <taxon>Bacteria</taxon>
        <taxon>Pseudomonadati</taxon>
        <taxon>Pseudomonadota</taxon>
        <taxon>Alphaproteobacteria</taxon>
        <taxon>Hyphomicrobiales</taxon>
        <taxon>Brucellaceae</taxon>
        <taxon>Brucella/Ochrobactrum group</taxon>
        <taxon>Brucella</taxon>
    </lineage>
</organism>
<protein>
    <recommendedName>
        <fullName evidence="1">Holliday junction branch migration complex subunit RuvA</fullName>
    </recommendedName>
</protein>